<name>PEPE_SHIFL</name>
<keyword id="KW-0963">Cytoplasm</keyword>
<keyword id="KW-0224">Dipeptidase</keyword>
<keyword id="KW-0378">Hydrolase</keyword>
<keyword id="KW-0645">Protease</keyword>
<keyword id="KW-1185">Reference proteome</keyword>
<keyword id="KW-0720">Serine protease</keyword>
<evidence type="ECO:0000255" key="1">
    <source>
        <dbReference type="HAMAP-Rule" id="MF_00510"/>
    </source>
</evidence>
<proteinExistence type="inferred from homology"/>
<organism>
    <name type="scientific">Shigella flexneri</name>
    <dbReference type="NCBI Taxonomy" id="623"/>
    <lineage>
        <taxon>Bacteria</taxon>
        <taxon>Pseudomonadati</taxon>
        <taxon>Pseudomonadota</taxon>
        <taxon>Gammaproteobacteria</taxon>
        <taxon>Enterobacterales</taxon>
        <taxon>Enterobacteriaceae</taxon>
        <taxon>Shigella</taxon>
    </lineage>
</organism>
<sequence length="229" mass="24628">MELLLLSNSTLPGKAWLEHALPLIAEQLQGRRSAVFIPFAGVTQTWDDYTEKTAAVLAPLGVSVTGIHSVVDPVAAIENAEIVIVGGGNTFQLLKQCRERGLLAPITDVVKRGALYIGWSAGANLACPTIRTTNDMPIVDPQGFDALNLFPLQINPHFTNALPEGHKGETREQRIRELLVVAPELTIIGLPEGNWITVSKGHATLGGPNTTYVFKAGEEAVPLEAGHRF</sequence>
<accession>Q83PB5</accession>
<accession>Q7BZI6</accession>
<dbReference type="EC" id="3.4.13.21" evidence="1"/>
<dbReference type="EMBL" id="AE005674">
    <property type="protein sequence ID" value="AAN45512.1"/>
    <property type="molecule type" value="Genomic_DNA"/>
</dbReference>
<dbReference type="EMBL" id="AE014073">
    <property type="protein sequence ID" value="AAP18687.1"/>
    <property type="molecule type" value="Genomic_DNA"/>
</dbReference>
<dbReference type="RefSeq" id="NP_709805.1">
    <property type="nucleotide sequence ID" value="NC_004337.2"/>
</dbReference>
<dbReference type="RefSeq" id="WP_000421772.1">
    <property type="nucleotide sequence ID" value="NZ_WPGW01000087.1"/>
</dbReference>
<dbReference type="SMR" id="Q83PB5"/>
<dbReference type="STRING" id="198214.SF4087"/>
<dbReference type="MEROPS" id="S51.001"/>
<dbReference type="PaxDb" id="198214-SF4087"/>
<dbReference type="GeneID" id="1024694"/>
<dbReference type="GeneID" id="75169467"/>
<dbReference type="KEGG" id="sfl:SF4087"/>
<dbReference type="KEGG" id="sfx:S3643"/>
<dbReference type="PATRIC" id="fig|198214.7.peg.4818"/>
<dbReference type="HOGENOM" id="CLU_071689_0_0_6"/>
<dbReference type="Proteomes" id="UP000001006">
    <property type="component" value="Chromosome"/>
</dbReference>
<dbReference type="Proteomes" id="UP000002673">
    <property type="component" value="Chromosome"/>
</dbReference>
<dbReference type="GO" id="GO:0005737">
    <property type="term" value="C:cytoplasm"/>
    <property type="evidence" value="ECO:0007669"/>
    <property type="project" value="UniProtKB-SubCell"/>
</dbReference>
<dbReference type="GO" id="GO:0016805">
    <property type="term" value="F:dipeptidase activity"/>
    <property type="evidence" value="ECO:0007669"/>
    <property type="project" value="UniProtKB-UniRule"/>
</dbReference>
<dbReference type="GO" id="GO:0008236">
    <property type="term" value="F:serine-type peptidase activity"/>
    <property type="evidence" value="ECO:0007669"/>
    <property type="project" value="UniProtKB-KW"/>
</dbReference>
<dbReference type="GO" id="GO:0006508">
    <property type="term" value="P:proteolysis"/>
    <property type="evidence" value="ECO:0007669"/>
    <property type="project" value="UniProtKB-UniRule"/>
</dbReference>
<dbReference type="CDD" id="cd03146">
    <property type="entry name" value="GAT1_Peptidase_E"/>
    <property type="match status" value="1"/>
</dbReference>
<dbReference type="FunFam" id="3.40.50.880:FF:000007">
    <property type="entry name" value="Peptidase E"/>
    <property type="match status" value="1"/>
</dbReference>
<dbReference type="Gene3D" id="3.40.50.880">
    <property type="match status" value="1"/>
</dbReference>
<dbReference type="HAMAP" id="MF_00510">
    <property type="entry name" value="Peptidase_E"/>
    <property type="match status" value="1"/>
</dbReference>
<dbReference type="InterPro" id="IPR029062">
    <property type="entry name" value="Class_I_gatase-like"/>
</dbReference>
<dbReference type="InterPro" id="IPR005320">
    <property type="entry name" value="Peptidase_S51"/>
</dbReference>
<dbReference type="InterPro" id="IPR023172">
    <property type="entry name" value="Peptidase_S51_dipeptidase-E"/>
</dbReference>
<dbReference type="NCBIfam" id="NF003642">
    <property type="entry name" value="PRK05282.1"/>
    <property type="match status" value="1"/>
</dbReference>
<dbReference type="PANTHER" id="PTHR20842:SF0">
    <property type="entry name" value="ALPHA-ASPARTYL DIPEPTIDASE"/>
    <property type="match status" value="1"/>
</dbReference>
<dbReference type="PANTHER" id="PTHR20842">
    <property type="entry name" value="PROTEASE S51 ALPHA-ASPARTYL DIPEPTIDASE"/>
    <property type="match status" value="1"/>
</dbReference>
<dbReference type="Pfam" id="PF03575">
    <property type="entry name" value="Peptidase_S51"/>
    <property type="match status" value="1"/>
</dbReference>
<dbReference type="SUPFAM" id="SSF52317">
    <property type="entry name" value="Class I glutamine amidotransferase-like"/>
    <property type="match status" value="1"/>
</dbReference>
<feature type="chain" id="PRO_0000209963" description="Peptidase E">
    <location>
        <begin position="1"/>
        <end position="229"/>
    </location>
</feature>
<feature type="active site" description="Charge relay system" evidence="1">
    <location>
        <position position="120"/>
    </location>
</feature>
<feature type="active site" description="Charge relay system" evidence="1">
    <location>
        <position position="135"/>
    </location>
</feature>
<feature type="active site" description="Charge relay system" evidence="1">
    <location>
        <position position="157"/>
    </location>
</feature>
<comment type="function">
    <text evidence="1">Hydrolyzes dipeptides containing N-terminal aspartate residues. May play a role in allowing the cell to use peptide aspartate to spare carbon otherwise required for the synthesis of the aspartate family of amino acids.</text>
</comment>
<comment type="catalytic activity">
    <reaction evidence="1">
        <text>Dipeptidase E catalyzes the hydrolysis of dipeptides Asp-|-Xaa. It does not act on peptides with N-terminal Glu, Asn or Gln, nor does it cleave isoaspartyl peptides.</text>
        <dbReference type="EC" id="3.4.13.21"/>
    </reaction>
</comment>
<comment type="subcellular location">
    <subcellularLocation>
        <location evidence="1">Cytoplasm</location>
    </subcellularLocation>
</comment>
<comment type="similarity">
    <text evidence="1">Belongs to the peptidase S51 family.</text>
</comment>
<protein>
    <recommendedName>
        <fullName evidence="1">Peptidase E</fullName>
        <ecNumber evidence="1">3.4.13.21</ecNumber>
    </recommendedName>
    <alternativeName>
        <fullName evidence="1">Alpha-aspartyl dipeptidase</fullName>
    </alternativeName>
    <alternativeName>
        <fullName evidence="1">Asp-specific dipeptidase</fullName>
    </alternativeName>
    <alternativeName>
        <fullName evidence="1">Dipeptidase E</fullName>
    </alternativeName>
</protein>
<gene>
    <name evidence="1" type="primary">pepE</name>
    <name type="ordered locus">SF4087</name>
    <name type="ordered locus">S3643</name>
</gene>
<reference key="1">
    <citation type="journal article" date="2002" name="Nucleic Acids Res.">
        <title>Genome sequence of Shigella flexneri 2a: insights into pathogenicity through comparison with genomes of Escherichia coli K12 and O157.</title>
        <authorList>
            <person name="Jin Q."/>
            <person name="Yuan Z."/>
            <person name="Xu J."/>
            <person name="Wang Y."/>
            <person name="Shen Y."/>
            <person name="Lu W."/>
            <person name="Wang J."/>
            <person name="Liu H."/>
            <person name="Yang J."/>
            <person name="Yang F."/>
            <person name="Zhang X."/>
            <person name="Zhang J."/>
            <person name="Yang G."/>
            <person name="Wu H."/>
            <person name="Qu D."/>
            <person name="Dong J."/>
            <person name="Sun L."/>
            <person name="Xue Y."/>
            <person name="Zhao A."/>
            <person name="Gao Y."/>
            <person name="Zhu J."/>
            <person name="Kan B."/>
            <person name="Ding K."/>
            <person name="Chen S."/>
            <person name="Cheng H."/>
            <person name="Yao Z."/>
            <person name="He B."/>
            <person name="Chen R."/>
            <person name="Ma D."/>
            <person name="Qiang B."/>
            <person name="Wen Y."/>
            <person name="Hou Y."/>
            <person name="Yu J."/>
        </authorList>
    </citation>
    <scope>NUCLEOTIDE SEQUENCE [LARGE SCALE GENOMIC DNA]</scope>
    <source>
        <strain>301 / Serotype 2a</strain>
    </source>
</reference>
<reference key="2">
    <citation type="journal article" date="2003" name="Infect. Immun.">
        <title>Complete genome sequence and comparative genomics of Shigella flexneri serotype 2a strain 2457T.</title>
        <authorList>
            <person name="Wei J."/>
            <person name="Goldberg M.B."/>
            <person name="Burland V."/>
            <person name="Venkatesan M.M."/>
            <person name="Deng W."/>
            <person name="Fournier G."/>
            <person name="Mayhew G.F."/>
            <person name="Plunkett G. III"/>
            <person name="Rose D.J."/>
            <person name="Darling A."/>
            <person name="Mau B."/>
            <person name="Perna N.T."/>
            <person name="Payne S.M."/>
            <person name="Runyen-Janecky L.J."/>
            <person name="Zhou S."/>
            <person name="Schwartz D.C."/>
            <person name="Blattner F.R."/>
        </authorList>
    </citation>
    <scope>NUCLEOTIDE SEQUENCE [LARGE SCALE GENOMIC DNA]</scope>
    <source>
        <strain>ATCC 700930 / 2457T / Serotype 2a</strain>
    </source>
</reference>